<keyword id="KW-0067">ATP-binding</keyword>
<keyword id="KW-0378">Hydrolase</keyword>
<keyword id="KW-0547">Nucleotide-binding</keyword>
<sequence length="254" mass="26963">MFVDLNSDLGESFGSWKMGNDDQILPVVTSANIACGFHAGDPLGILKTVRKAVELGVTIGAHVSYPDLVGFGRRNMDLSRDELIADVLYQISALDGLAKVAGSKVQYVKPHGALYNTIAYDQVQAAAVIDAIKMYNPELVLVALAGSNLVEQARAAGLKVVSEAFADRAYNSDGSLVSRRLEGAVLHDSAFVASRVVSMLKNGGVESIDGVFTPIQADTICLHGDTDGALEMSAAIKAELVKNNIEIRPFVNKA</sequence>
<gene>
    <name evidence="1" type="primary">pxpA</name>
    <name type="ordered locus">ABBFA_002265</name>
</gene>
<comment type="function">
    <text evidence="1">Catalyzes the cleavage of 5-oxoproline to form L-glutamate coupled to the hydrolysis of ATP to ADP and inorganic phosphate.</text>
</comment>
<comment type="catalytic activity">
    <reaction evidence="1">
        <text>5-oxo-L-proline + ATP + 2 H2O = L-glutamate + ADP + phosphate + H(+)</text>
        <dbReference type="Rhea" id="RHEA:10348"/>
        <dbReference type="ChEBI" id="CHEBI:15377"/>
        <dbReference type="ChEBI" id="CHEBI:15378"/>
        <dbReference type="ChEBI" id="CHEBI:29985"/>
        <dbReference type="ChEBI" id="CHEBI:30616"/>
        <dbReference type="ChEBI" id="CHEBI:43474"/>
        <dbReference type="ChEBI" id="CHEBI:58402"/>
        <dbReference type="ChEBI" id="CHEBI:456216"/>
        <dbReference type="EC" id="3.5.2.9"/>
    </reaction>
</comment>
<comment type="subunit">
    <text evidence="1">Forms a complex composed of PxpA, PxpB and PxpC.</text>
</comment>
<comment type="similarity">
    <text evidence="1">Belongs to the LamB/PxpA family.</text>
</comment>
<protein>
    <recommendedName>
        <fullName evidence="1">5-oxoprolinase subunit A</fullName>
        <shortName evidence="1">5-OPase subunit A</shortName>
        <ecNumber evidence="1">3.5.2.9</ecNumber>
    </recommendedName>
    <alternativeName>
        <fullName evidence="1">5-oxoprolinase (ATP-hydrolyzing) subunit A</fullName>
    </alternativeName>
</protein>
<evidence type="ECO:0000255" key="1">
    <source>
        <dbReference type="HAMAP-Rule" id="MF_00691"/>
    </source>
</evidence>
<reference key="1">
    <citation type="journal article" date="2008" name="J. Bacteriol.">
        <title>Comparative genome sequence analysis of multidrug-resistant Acinetobacter baumannii.</title>
        <authorList>
            <person name="Adams M.D."/>
            <person name="Goglin K."/>
            <person name="Molyneaux N."/>
            <person name="Hujer K.M."/>
            <person name="Lavender H."/>
            <person name="Jamison J.J."/>
            <person name="MacDonald I.J."/>
            <person name="Martin K.M."/>
            <person name="Russo T."/>
            <person name="Campagnari A.A."/>
            <person name="Hujer A.M."/>
            <person name="Bonomo R.A."/>
            <person name="Gill S.R."/>
        </authorList>
    </citation>
    <scope>NUCLEOTIDE SEQUENCE [LARGE SCALE GENOMIC DNA]</scope>
    <source>
        <strain>AB307-0294</strain>
    </source>
</reference>
<accession>B7H4L9</accession>
<name>PXPA_ACIB3</name>
<organism>
    <name type="scientific">Acinetobacter baumannii (strain AB307-0294)</name>
    <dbReference type="NCBI Taxonomy" id="557600"/>
    <lineage>
        <taxon>Bacteria</taxon>
        <taxon>Pseudomonadati</taxon>
        <taxon>Pseudomonadota</taxon>
        <taxon>Gammaproteobacteria</taxon>
        <taxon>Moraxellales</taxon>
        <taxon>Moraxellaceae</taxon>
        <taxon>Acinetobacter</taxon>
        <taxon>Acinetobacter calcoaceticus/baumannii complex</taxon>
    </lineage>
</organism>
<feature type="chain" id="PRO_1000132032" description="5-oxoprolinase subunit A">
    <location>
        <begin position="1"/>
        <end position="254"/>
    </location>
</feature>
<dbReference type="EC" id="3.5.2.9" evidence="1"/>
<dbReference type="EMBL" id="CP001172">
    <property type="protein sequence ID" value="ACJ58525.1"/>
    <property type="molecule type" value="Genomic_DNA"/>
</dbReference>
<dbReference type="RefSeq" id="WP_000496077.1">
    <property type="nucleotide sequence ID" value="NZ_CP001172.1"/>
</dbReference>
<dbReference type="SMR" id="B7H4L9"/>
<dbReference type="HOGENOM" id="CLU_069535_0_0_6"/>
<dbReference type="Proteomes" id="UP000006924">
    <property type="component" value="Chromosome"/>
</dbReference>
<dbReference type="GO" id="GO:0017168">
    <property type="term" value="F:5-oxoprolinase (ATP-hydrolyzing) activity"/>
    <property type="evidence" value="ECO:0007669"/>
    <property type="project" value="UniProtKB-UniRule"/>
</dbReference>
<dbReference type="GO" id="GO:0005524">
    <property type="term" value="F:ATP binding"/>
    <property type="evidence" value="ECO:0007669"/>
    <property type="project" value="UniProtKB-UniRule"/>
</dbReference>
<dbReference type="GO" id="GO:0005975">
    <property type="term" value="P:carbohydrate metabolic process"/>
    <property type="evidence" value="ECO:0007669"/>
    <property type="project" value="InterPro"/>
</dbReference>
<dbReference type="CDD" id="cd10787">
    <property type="entry name" value="LamB_YcsF_like"/>
    <property type="match status" value="1"/>
</dbReference>
<dbReference type="Gene3D" id="3.20.20.370">
    <property type="entry name" value="Glycoside hydrolase/deacetylase"/>
    <property type="match status" value="1"/>
</dbReference>
<dbReference type="HAMAP" id="MF_00691">
    <property type="entry name" value="PxpA"/>
    <property type="match status" value="1"/>
</dbReference>
<dbReference type="InterPro" id="IPR011330">
    <property type="entry name" value="Glyco_hydro/deAcase_b/a-brl"/>
</dbReference>
<dbReference type="InterPro" id="IPR005501">
    <property type="entry name" value="LamB/YcsF/PxpA-like"/>
</dbReference>
<dbReference type="NCBIfam" id="NF003814">
    <property type="entry name" value="PRK05406.1-3"/>
    <property type="match status" value="1"/>
</dbReference>
<dbReference type="NCBIfam" id="NF003816">
    <property type="entry name" value="PRK05406.1-5"/>
    <property type="match status" value="1"/>
</dbReference>
<dbReference type="PANTHER" id="PTHR30292:SF0">
    <property type="entry name" value="5-OXOPROLINASE SUBUNIT A"/>
    <property type="match status" value="1"/>
</dbReference>
<dbReference type="PANTHER" id="PTHR30292">
    <property type="entry name" value="UNCHARACTERIZED PROTEIN YBGL-RELATED"/>
    <property type="match status" value="1"/>
</dbReference>
<dbReference type="Pfam" id="PF03746">
    <property type="entry name" value="LamB_YcsF"/>
    <property type="match status" value="1"/>
</dbReference>
<dbReference type="SUPFAM" id="SSF88713">
    <property type="entry name" value="Glycoside hydrolase/deacetylase"/>
    <property type="match status" value="1"/>
</dbReference>
<proteinExistence type="inferred from homology"/>